<gene>
    <name evidence="1" type="primary">rpmB</name>
    <name type="ordered locus">ACICU_00458</name>
</gene>
<sequence>MSKVCQVTGKRPVVGNNVSHANNKTKRRFEPNLHHHRFWLESEKRFVRLRLTTKGMRIIDKLGIEKVVADLRAQGQKI</sequence>
<name>RL28_ACIBC</name>
<reference key="1">
    <citation type="journal article" date="2008" name="Antimicrob. Agents Chemother.">
        <title>Whole-genome pyrosequencing of an epidemic multidrug-resistant Acinetobacter baumannii strain belonging to the European clone II group.</title>
        <authorList>
            <person name="Iacono M."/>
            <person name="Villa L."/>
            <person name="Fortini D."/>
            <person name="Bordoni R."/>
            <person name="Imperi F."/>
            <person name="Bonnal R.J."/>
            <person name="Sicheritz-Ponten T."/>
            <person name="De Bellis G."/>
            <person name="Visca P."/>
            <person name="Cassone A."/>
            <person name="Carattoli A."/>
        </authorList>
    </citation>
    <scope>NUCLEOTIDE SEQUENCE [LARGE SCALE GENOMIC DNA]</scope>
    <source>
        <strain>ACICU</strain>
    </source>
</reference>
<organism>
    <name type="scientific">Acinetobacter baumannii (strain ACICU)</name>
    <dbReference type="NCBI Taxonomy" id="405416"/>
    <lineage>
        <taxon>Bacteria</taxon>
        <taxon>Pseudomonadati</taxon>
        <taxon>Pseudomonadota</taxon>
        <taxon>Gammaproteobacteria</taxon>
        <taxon>Moraxellales</taxon>
        <taxon>Moraxellaceae</taxon>
        <taxon>Acinetobacter</taxon>
        <taxon>Acinetobacter calcoaceticus/baumannii complex</taxon>
    </lineage>
</organism>
<evidence type="ECO:0000255" key="1">
    <source>
        <dbReference type="HAMAP-Rule" id="MF_00373"/>
    </source>
</evidence>
<evidence type="ECO:0000305" key="2"/>
<feature type="chain" id="PRO_1000121568" description="Large ribosomal subunit protein bL28">
    <location>
        <begin position="1"/>
        <end position="78"/>
    </location>
</feature>
<comment type="similarity">
    <text evidence="1">Belongs to the bacterial ribosomal protein bL28 family.</text>
</comment>
<keyword id="KW-0687">Ribonucleoprotein</keyword>
<keyword id="KW-0689">Ribosomal protein</keyword>
<dbReference type="EMBL" id="CP000863">
    <property type="protein sequence ID" value="ACC55770.1"/>
    <property type="molecule type" value="Genomic_DNA"/>
</dbReference>
<dbReference type="RefSeq" id="WP_000048256.1">
    <property type="nucleotide sequence ID" value="NZ_CP031380.1"/>
</dbReference>
<dbReference type="SMR" id="B2I392"/>
<dbReference type="GeneID" id="97177253"/>
<dbReference type="KEGG" id="abc:ACICU_00458"/>
<dbReference type="HOGENOM" id="CLU_064548_3_1_6"/>
<dbReference type="Proteomes" id="UP000008839">
    <property type="component" value="Chromosome"/>
</dbReference>
<dbReference type="GO" id="GO:0022625">
    <property type="term" value="C:cytosolic large ribosomal subunit"/>
    <property type="evidence" value="ECO:0007669"/>
    <property type="project" value="TreeGrafter"/>
</dbReference>
<dbReference type="GO" id="GO:0003735">
    <property type="term" value="F:structural constituent of ribosome"/>
    <property type="evidence" value="ECO:0007669"/>
    <property type="project" value="InterPro"/>
</dbReference>
<dbReference type="GO" id="GO:0006412">
    <property type="term" value="P:translation"/>
    <property type="evidence" value="ECO:0007669"/>
    <property type="project" value="UniProtKB-UniRule"/>
</dbReference>
<dbReference type="FunFam" id="2.30.170.40:FF:000001">
    <property type="entry name" value="50S ribosomal protein L28"/>
    <property type="match status" value="1"/>
</dbReference>
<dbReference type="Gene3D" id="2.30.170.40">
    <property type="entry name" value="Ribosomal protein L28/L24"/>
    <property type="match status" value="1"/>
</dbReference>
<dbReference type="HAMAP" id="MF_00373">
    <property type="entry name" value="Ribosomal_bL28"/>
    <property type="match status" value="1"/>
</dbReference>
<dbReference type="InterPro" id="IPR026569">
    <property type="entry name" value="Ribosomal_bL28"/>
</dbReference>
<dbReference type="InterPro" id="IPR034704">
    <property type="entry name" value="Ribosomal_bL28/bL31-like_sf"/>
</dbReference>
<dbReference type="InterPro" id="IPR001383">
    <property type="entry name" value="Ribosomal_bL28_bact-type"/>
</dbReference>
<dbReference type="InterPro" id="IPR037147">
    <property type="entry name" value="Ribosomal_bL28_sf"/>
</dbReference>
<dbReference type="NCBIfam" id="TIGR00009">
    <property type="entry name" value="L28"/>
    <property type="match status" value="1"/>
</dbReference>
<dbReference type="PANTHER" id="PTHR13528">
    <property type="entry name" value="39S RIBOSOMAL PROTEIN L28, MITOCHONDRIAL"/>
    <property type="match status" value="1"/>
</dbReference>
<dbReference type="PANTHER" id="PTHR13528:SF2">
    <property type="entry name" value="LARGE RIBOSOMAL SUBUNIT PROTEIN BL28M"/>
    <property type="match status" value="1"/>
</dbReference>
<dbReference type="Pfam" id="PF00830">
    <property type="entry name" value="Ribosomal_L28"/>
    <property type="match status" value="1"/>
</dbReference>
<dbReference type="SUPFAM" id="SSF143800">
    <property type="entry name" value="L28p-like"/>
    <property type="match status" value="1"/>
</dbReference>
<proteinExistence type="inferred from homology"/>
<protein>
    <recommendedName>
        <fullName evidence="1">Large ribosomal subunit protein bL28</fullName>
    </recommendedName>
    <alternativeName>
        <fullName evidence="2">50S ribosomal protein L28</fullName>
    </alternativeName>
</protein>
<accession>B2I392</accession>